<comment type="function">
    <text evidence="1">Catalyzes the oxidative conversion of Delta(5)-ene-3-beta-hydroxy steroid, and the oxidative conversion of ketosteroids. The 3-beta-HSD enzymatic system plays a crucial role in the biosynthesis of all classes of hormonal steroids. During viral infection, steroid production contributes to virulence by inhibiting the host inflammatory response.</text>
</comment>
<comment type="catalytic activity">
    <reaction evidence="1">
        <text>a 3beta-hydroxy-Delta(5)-steroid + NAD(+) = a 3-oxo-Delta(5)-steroid + NADH + H(+)</text>
        <dbReference type="Rhea" id="RHEA:24076"/>
        <dbReference type="ChEBI" id="CHEBI:1722"/>
        <dbReference type="ChEBI" id="CHEBI:15378"/>
        <dbReference type="ChEBI" id="CHEBI:47907"/>
        <dbReference type="ChEBI" id="CHEBI:57540"/>
        <dbReference type="ChEBI" id="CHEBI:57945"/>
        <dbReference type="EC" id="1.1.1.145"/>
    </reaction>
</comment>
<comment type="catalytic activity">
    <reaction evidence="1">
        <text>a 3-oxo-Delta(5)-steroid = a 3-oxo-Delta(4)-steroid</text>
        <dbReference type="Rhea" id="RHEA:14709"/>
        <dbReference type="ChEBI" id="CHEBI:47907"/>
        <dbReference type="ChEBI" id="CHEBI:47909"/>
        <dbReference type="EC" id="5.3.3.1"/>
    </reaction>
</comment>
<comment type="pathway">
    <text evidence="1">Lipid metabolism; steroid biosynthesis.</text>
</comment>
<comment type="induction">
    <text>Expressed in the early phase of the viral replicative cycle.</text>
</comment>
<comment type="similarity">
    <text evidence="2">Belongs to the 3-beta-HSD family.</text>
</comment>
<accession>A0A7H0DNE2</accession>
<keyword id="KW-0244">Early protein</keyword>
<keyword id="KW-0945">Host-virus interaction</keyword>
<keyword id="KW-0413">Isomerase</keyword>
<keyword id="KW-0511">Multifunctional enzyme</keyword>
<keyword id="KW-0520">NAD</keyword>
<keyword id="KW-0560">Oxidoreductase</keyword>
<keyword id="KW-1185">Reference proteome</keyword>
<keyword id="KW-0755">Steroidogenesis</keyword>
<keyword id="KW-0899">Viral immunoevasion</keyword>
<organism>
    <name type="scientific">Monkeypox virus</name>
    <dbReference type="NCBI Taxonomy" id="10244"/>
    <lineage>
        <taxon>Viruses</taxon>
        <taxon>Varidnaviria</taxon>
        <taxon>Bamfordvirae</taxon>
        <taxon>Nucleocytoviricota</taxon>
        <taxon>Pokkesviricetes</taxon>
        <taxon>Chitovirales</taxon>
        <taxon>Poxviridae</taxon>
        <taxon>Chordopoxvirinae</taxon>
        <taxon>Orthopoxvirus</taxon>
    </lineage>
</organism>
<dbReference type="EC" id="1.1.1.145"/>
<dbReference type="EC" id="5.3.3.1"/>
<dbReference type="EMBL" id="MT903340">
    <property type="protein sequence ID" value="QNP13025.1"/>
    <property type="molecule type" value="Genomic_DNA"/>
</dbReference>
<dbReference type="RefSeq" id="NP_536582.1">
    <property type="nucleotide sequence ID" value="NC_003310.1"/>
</dbReference>
<dbReference type="RefSeq" id="YP_010377152.1">
    <property type="nucleotide sequence ID" value="NC_063383.1"/>
</dbReference>
<dbReference type="SMR" id="A0A7H0DNE2"/>
<dbReference type="GeneID" id="72551566"/>
<dbReference type="GeneID" id="928937"/>
<dbReference type="KEGG" id="vg:928937"/>
<dbReference type="UniPathway" id="UPA00062"/>
<dbReference type="Proteomes" id="UP000516359">
    <property type="component" value="Genome"/>
</dbReference>
<dbReference type="GO" id="GO:0016853">
    <property type="term" value="F:isomerase activity"/>
    <property type="evidence" value="ECO:0007669"/>
    <property type="project" value="UniProtKB-KW"/>
</dbReference>
<dbReference type="GO" id="GO:0016616">
    <property type="term" value="F:oxidoreductase activity, acting on the CH-OH group of donors, NAD or NADP as acceptor"/>
    <property type="evidence" value="ECO:0007669"/>
    <property type="project" value="InterPro"/>
</dbReference>
<dbReference type="GO" id="GO:0006694">
    <property type="term" value="P:steroid biosynthetic process"/>
    <property type="evidence" value="ECO:0007669"/>
    <property type="project" value="UniProtKB-UniPathway"/>
</dbReference>
<dbReference type="FunFam" id="3.40.50.720:FF:000495">
    <property type="entry name" value="3 hydroxysteroid dehydrogenase, putative"/>
    <property type="match status" value="1"/>
</dbReference>
<dbReference type="Gene3D" id="3.40.50.720">
    <property type="entry name" value="NAD(P)-binding Rossmann-like Domain"/>
    <property type="match status" value="1"/>
</dbReference>
<dbReference type="InterPro" id="IPR002225">
    <property type="entry name" value="3Beta_OHSteriod_DH/Estase"/>
</dbReference>
<dbReference type="InterPro" id="IPR050177">
    <property type="entry name" value="Lipid_A_modif_metabolic_enz"/>
</dbReference>
<dbReference type="InterPro" id="IPR036291">
    <property type="entry name" value="NAD(P)-bd_dom_sf"/>
</dbReference>
<dbReference type="PANTHER" id="PTHR43245">
    <property type="entry name" value="BIFUNCTIONAL POLYMYXIN RESISTANCE PROTEIN ARNA"/>
    <property type="match status" value="1"/>
</dbReference>
<dbReference type="PANTHER" id="PTHR43245:SF51">
    <property type="entry name" value="SHORT CHAIN DEHYDROGENASE_REDUCTASE FAMILY 42E, MEMBER 2"/>
    <property type="match status" value="1"/>
</dbReference>
<dbReference type="Pfam" id="PF01073">
    <property type="entry name" value="3Beta_HSD"/>
    <property type="match status" value="1"/>
</dbReference>
<dbReference type="SUPFAM" id="SSF51735">
    <property type="entry name" value="NAD(P)-binding Rossmann-fold domains"/>
    <property type="match status" value="1"/>
</dbReference>
<evidence type="ECO:0000250" key="1">
    <source>
        <dbReference type="UniProtKB" id="P26670"/>
    </source>
</evidence>
<evidence type="ECO:0000305" key="2"/>
<name>3BHS_MONPV</name>
<organismHost>
    <name type="scientific">Cynomys gunnisoni</name>
    <name type="common">Gunnison's prairie dog</name>
    <name type="synonym">Spermophilus gunnisoni</name>
    <dbReference type="NCBI Taxonomy" id="45479"/>
</organismHost>
<organismHost>
    <name type="scientific">Cynomys leucurus</name>
    <name type="common">White-tailed prairie dog</name>
    <dbReference type="NCBI Taxonomy" id="99825"/>
</organismHost>
<organismHost>
    <name type="scientific">Cynomys ludovicianus</name>
    <name type="common">Black-tailed prairie dog</name>
    <dbReference type="NCBI Taxonomy" id="45480"/>
</organismHost>
<organismHost>
    <name type="scientific">Cynomys mexicanus</name>
    <name type="common">Mexican prairie dog</name>
    <dbReference type="NCBI Taxonomy" id="99826"/>
</organismHost>
<organismHost>
    <name type="scientific">Cynomys parvidens</name>
    <name type="common">Utah prairie dog</name>
    <dbReference type="NCBI Taxonomy" id="99827"/>
</organismHost>
<organismHost>
    <name type="scientific">Gliridae</name>
    <name type="common">dormice</name>
    <dbReference type="NCBI Taxonomy" id="30650"/>
</organismHost>
<organismHost>
    <name type="scientific">Heliosciurus ruwenzorii</name>
    <name type="common">Ruwenzori sun squirrel</name>
    <dbReference type="NCBI Taxonomy" id="226685"/>
</organismHost>
<organismHost>
    <name type="scientific">Homo sapiens</name>
    <name type="common">Human</name>
    <dbReference type="NCBI Taxonomy" id="9606"/>
</organismHost>
<organismHost>
    <name type="scientific">Mus musculus</name>
    <name type="common">Mouse</name>
    <dbReference type="NCBI Taxonomy" id="10090"/>
</organismHost>
<gene>
    <name type="primary">OPG174</name>
    <name type="ORF">MPXVgp158</name>
</gene>
<protein>
    <recommendedName>
        <fullName>3 beta-hydroxysteroid dehydrogenase/Delta 5--&gt;4-isomerase</fullName>
        <shortName>3-beta-HSD</shortName>
    </recommendedName>
    <domain>
        <recommendedName>
            <fullName>3-beta-hydroxy-Delta(5)-steroid dehydrogenase</fullName>
            <ecNumber>1.1.1.145</ecNumber>
        </recommendedName>
        <alternativeName>
            <fullName>3-beta-hydroxy-5-ene steroid dehydrogenase</fullName>
        </alternativeName>
        <alternativeName>
            <fullName>Progesterone reductase</fullName>
        </alternativeName>
    </domain>
    <domain>
        <recommendedName>
            <fullName>Steroid Delta-isomerase</fullName>
            <ecNumber>5.3.3.1</ecNumber>
        </recommendedName>
        <alternativeName>
            <fullName>Delta-5-3-ketosteroid isomerase</fullName>
        </alternativeName>
    </domain>
</protein>
<sequence>MAVYAVTGGAGFLGRYIVKLLISADDVQEIRVIDIVEDPQPITSKVKVINYIQCDINDFDKVREALDGVNLIIHTAALVDVFGKYTDNEIMKVNYYGTQTILAACVDLGIKYLIYTSSMEAIGPNKHGNPFIGHEHTLYDISPGHVYAKSKRMAEQLVMKANNSVIMNGAKLYTCCLRPTGIYGEGDKLTKVFYEQCKQHGNIMYRTVDDDAVHSRVYVGNVAWMHVLAAKYIQYPGSAIKGNAYFCYDYSPSCSYDMFNLLLMKPLGIEQGSRIPRWMLKMYACKNDMKRILFRKPSILNNYTLKISNTTFEVRTNNAELDFNYSPIFDVDVAFERTRKWLEESE</sequence>
<feature type="chain" id="PRO_0000457606" description="3 beta-hydroxysteroid dehydrogenase/Delta 5--&gt;4-isomerase">
    <location>
        <begin position="1"/>
        <end position="346"/>
    </location>
</feature>
<feature type="active site" description="Proton acceptor" evidence="1">
    <location>
        <position position="147"/>
    </location>
</feature>
<feature type="binding site" evidence="1">
    <location>
        <position position="151"/>
    </location>
    <ligand>
        <name>NAD(+)</name>
        <dbReference type="ChEBI" id="CHEBI:57540"/>
    </ligand>
</feature>
<proteinExistence type="evidence at transcript level"/>
<reference key="1">
    <citation type="journal article" date="2022" name="J. Infect. Dis.">
        <title>Exportation of Monkeypox virus from the African continent.</title>
        <authorList>
            <person name="Mauldin M.R."/>
            <person name="McCollum A.M."/>
            <person name="Nakazawa Y.J."/>
            <person name="Mandra A."/>
            <person name="Whitehouse E.R."/>
            <person name="Davidson W."/>
            <person name="Zhao H."/>
            <person name="Gao J."/>
            <person name="Li Y."/>
            <person name="Doty J."/>
            <person name="Yinka-Ogunleye A."/>
            <person name="Akinpelu A."/>
            <person name="Aruna O."/>
            <person name="Naidoo D."/>
            <person name="Lewandowski K."/>
            <person name="Afrough B."/>
            <person name="Graham V."/>
            <person name="Aarons E."/>
            <person name="Hewson R."/>
            <person name="Vipond R."/>
            <person name="Dunning J."/>
            <person name="Chand M."/>
            <person name="Brown C."/>
            <person name="Cohen-Gihon I."/>
            <person name="Erez N."/>
            <person name="Shifman O."/>
            <person name="Israeli O."/>
            <person name="Sharon M."/>
            <person name="Schwartz E."/>
            <person name="Beth-Din A."/>
            <person name="Zvi A."/>
            <person name="Mak T.M."/>
            <person name="Ng Y.K."/>
            <person name="Cui L."/>
            <person name="Lin R.T.P."/>
            <person name="Olson V.A."/>
            <person name="Brooks T."/>
            <person name="Paran N."/>
            <person name="Ihekweazu C."/>
            <person name="Reynolds M.G."/>
        </authorList>
    </citation>
    <scope>NUCLEOTIDE SEQUENCE [LARGE SCALE GENOMIC DNA]</scope>
    <source>
        <strain>MPXV-M5312_HM12_Rivers</strain>
    </source>
</reference>